<reference key="1">
    <citation type="journal article" date="2007" name="PLoS ONE">
        <title>Molecular correlates of host specialization in Staphylococcus aureus.</title>
        <authorList>
            <person name="Herron-Olson L."/>
            <person name="Fitzgerald J.R."/>
            <person name="Musser J.M."/>
            <person name="Kapur V."/>
        </authorList>
    </citation>
    <scope>NUCLEOTIDE SEQUENCE [LARGE SCALE GENOMIC DNA]</scope>
    <source>
        <strain>bovine RF122 / ET3-1</strain>
    </source>
</reference>
<protein>
    <recommendedName>
        <fullName>Antitoxin MazE</fullName>
    </recommendedName>
</protein>
<accession>Q2YUI4</accession>
<comment type="function">
    <text evidence="1">Antitoxin component of a type II toxin-antitoxin (TA) system. Labile antitoxin that binds to cognate MazF toxin and counteracts its endoribonuclease activity.</text>
</comment>
<comment type="subunit">
    <text evidence="1">Forms a complex with cognate toxin MazF which inhibits the endoribonuclease activity of MazF.</text>
</comment>
<comment type="similarity">
    <text evidence="2">Belongs to the MazE/EndoAI family.</text>
</comment>
<evidence type="ECO:0000250" key="1">
    <source>
        <dbReference type="UniProtKB" id="P0C7B4"/>
    </source>
</evidence>
<evidence type="ECO:0000305" key="2"/>
<proteinExistence type="inferred from homology"/>
<organism>
    <name type="scientific">Staphylococcus aureus (strain bovine RF122 / ET3-1)</name>
    <dbReference type="NCBI Taxonomy" id="273036"/>
    <lineage>
        <taxon>Bacteria</taxon>
        <taxon>Bacillati</taxon>
        <taxon>Bacillota</taxon>
        <taxon>Bacilli</taxon>
        <taxon>Bacillales</taxon>
        <taxon>Staphylococcaceae</taxon>
        <taxon>Staphylococcus</taxon>
    </lineage>
</organism>
<sequence length="56" mass="6252">MLSFSQNRSHSLEQSLKEGYSQMADLNLSLANEAFPIECEACDCNETYLSSNSTNE</sequence>
<feature type="chain" id="PRO_0000330710" description="Antitoxin MazE">
    <location>
        <begin position="1"/>
        <end position="56"/>
    </location>
</feature>
<gene>
    <name type="primary">mazE</name>
    <name type="ordered locus">SAB1954c</name>
</gene>
<keyword id="KW-1277">Toxin-antitoxin system</keyword>
<dbReference type="EMBL" id="AJ938182">
    <property type="protein sequence ID" value="CAI81643.1"/>
    <property type="molecule type" value="Genomic_DNA"/>
</dbReference>
<dbReference type="RefSeq" id="WP_000948331.1">
    <property type="nucleotide sequence ID" value="NC_007622.1"/>
</dbReference>
<dbReference type="SMR" id="Q2YUI4"/>
<dbReference type="GeneID" id="98346377"/>
<dbReference type="KEGG" id="sab:SAB1954c"/>
<dbReference type="HOGENOM" id="CLU_3012108_0_0_9"/>
<dbReference type="GO" id="GO:0006355">
    <property type="term" value="P:regulation of DNA-templated transcription"/>
    <property type="evidence" value="ECO:0007669"/>
    <property type="project" value="InterPro"/>
</dbReference>
<dbReference type="Gene3D" id="1.10.1220.10">
    <property type="entry name" value="Met repressor-like"/>
    <property type="match status" value="1"/>
</dbReference>
<dbReference type="InterPro" id="IPR013321">
    <property type="entry name" value="Arc_rbn_hlx_hlx"/>
</dbReference>
<dbReference type="InterPro" id="IPR048242">
    <property type="entry name" value="MazE"/>
</dbReference>
<dbReference type="NCBIfam" id="NF041459">
    <property type="entry name" value="antitoxMazE_Staph"/>
    <property type="match status" value="1"/>
</dbReference>
<name>MAZE_STAAB</name>